<proteinExistence type="inferred from homology"/>
<keyword id="KW-0472">Membrane</keyword>
<keyword id="KW-0479">Metal-binding</keyword>
<keyword id="KW-0597">Phosphoprotein</keyword>
<keyword id="KW-1185">Reference proteome</keyword>
<keyword id="KW-0732">Signal</keyword>
<keyword id="KW-0808">Transferase</keyword>
<keyword id="KW-0812">Transmembrane</keyword>
<keyword id="KW-1133">Transmembrane helix</keyword>
<keyword id="KW-0833">Ubl conjugation pathway</keyword>
<keyword id="KW-0862">Zinc</keyword>
<keyword id="KW-0863">Zinc-finger</keyword>
<name>ATL35_ARATH</name>
<protein>
    <recommendedName>
        <fullName>Putative RING-H2 finger protein ATL35</fullName>
        <ecNumber evidence="5">2.3.2.27</ecNumber>
    </recommendedName>
    <alternativeName>
        <fullName evidence="5">RING-type E3 ubiquitin transferase ATL35</fullName>
    </alternativeName>
</protein>
<reference key="1">
    <citation type="journal article" date="1999" name="Nature">
        <title>Sequence and analysis of chromosome 4 of the plant Arabidopsis thaliana.</title>
        <authorList>
            <person name="Mayer K.F.X."/>
            <person name="Schueller C."/>
            <person name="Wambutt R."/>
            <person name="Murphy G."/>
            <person name="Volckaert G."/>
            <person name="Pohl T."/>
            <person name="Duesterhoeft A."/>
            <person name="Stiekema W."/>
            <person name="Entian K.-D."/>
            <person name="Terryn N."/>
            <person name="Harris B."/>
            <person name="Ansorge W."/>
            <person name="Brandt P."/>
            <person name="Grivell L.A."/>
            <person name="Rieger M."/>
            <person name="Weichselgartner M."/>
            <person name="de Simone V."/>
            <person name="Obermaier B."/>
            <person name="Mache R."/>
            <person name="Mueller M."/>
            <person name="Kreis M."/>
            <person name="Delseny M."/>
            <person name="Puigdomenech P."/>
            <person name="Watson M."/>
            <person name="Schmidtheini T."/>
            <person name="Reichert B."/>
            <person name="Portetelle D."/>
            <person name="Perez-Alonso M."/>
            <person name="Boutry M."/>
            <person name="Bancroft I."/>
            <person name="Vos P."/>
            <person name="Hoheisel J."/>
            <person name="Zimmermann W."/>
            <person name="Wedler H."/>
            <person name="Ridley P."/>
            <person name="Langham S.-A."/>
            <person name="McCullagh B."/>
            <person name="Bilham L."/>
            <person name="Robben J."/>
            <person name="van der Schueren J."/>
            <person name="Grymonprez B."/>
            <person name="Chuang Y.-J."/>
            <person name="Vandenbussche F."/>
            <person name="Braeken M."/>
            <person name="Weltjens I."/>
            <person name="Voet M."/>
            <person name="Bastiaens I."/>
            <person name="Aert R."/>
            <person name="Defoor E."/>
            <person name="Weitzenegger T."/>
            <person name="Bothe G."/>
            <person name="Ramsperger U."/>
            <person name="Hilbert H."/>
            <person name="Braun M."/>
            <person name="Holzer E."/>
            <person name="Brandt A."/>
            <person name="Peters S."/>
            <person name="van Staveren M."/>
            <person name="Dirkse W."/>
            <person name="Mooijman P."/>
            <person name="Klein Lankhorst R."/>
            <person name="Rose M."/>
            <person name="Hauf J."/>
            <person name="Koetter P."/>
            <person name="Berneiser S."/>
            <person name="Hempel S."/>
            <person name="Feldpausch M."/>
            <person name="Lamberth S."/>
            <person name="Van den Daele H."/>
            <person name="De Keyser A."/>
            <person name="Buysshaert C."/>
            <person name="Gielen J."/>
            <person name="Villarroel R."/>
            <person name="De Clercq R."/>
            <person name="van Montagu M."/>
            <person name="Rogers J."/>
            <person name="Cronin A."/>
            <person name="Quail M.A."/>
            <person name="Bray-Allen S."/>
            <person name="Clark L."/>
            <person name="Doggett J."/>
            <person name="Hall S."/>
            <person name="Kay M."/>
            <person name="Lennard N."/>
            <person name="McLay K."/>
            <person name="Mayes R."/>
            <person name="Pettett A."/>
            <person name="Rajandream M.A."/>
            <person name="Lyne M."/>
            <person name="Benes V."/>
            <person name="Rechmann S."/>
            <person name="Borkova D."/>
            <person name="Bloecker H."/>
            <person name="Scharfe M."/>
            <person name="Grimm M."/>
            <person name="Loehnert T.-H."/>
            <person name="Dose S."/>
            <person name="de Haan M."/>
            <person name="Maarse A.C."/>
            <person name="Schaefer M."/>
            <person name="Mueller-Auer S."/>
            <person name="Gabel C."/>
            <person name="Fuchs M."/>
            <person name="Fartmann B."/>
            <person name="Granderath K."/>
            <person name="Dauner D."/>
            <person name="Herzl A."/>
            <person name="Neumann S."/>
            <person name="Argiriou A."/>
            <person name="Vitale D."/>
            <person name="Liguori R."/>
            <person name="Piravandi E."/>
            <person name="Massenet O."/>
            <person name="Quigley F."/>
            <person name="Clabauld G."/>
            <person name="Muendlein A."/>
            <person name="Felber R."/>
            <person name="Schnabl S."/>
            <person name="Hiller R."/>
            <person name="Schmidt W."/>
            <person name="Lecharny A."/>
            <person name="Aubourg S."/>
            <person name="Chefdor F."/>
            <person name="Cooke R."/>
            <person name="Berger C."/>
            <person name="Monfort A."/>
            <person name="Casacuberta E."/>
            <person name="Gibbons T."/>
            <person name="Weber N."/>
            <person name="Vandenbol M."/>
            <person name="Bargues M."/>
            <person name="Terol J."/>
            <person name="Torres A."/>
            <person name="Perez-Perez A."/>
            <person name="Purnelle B."/>
            <person name="Bent E."/>
            <person name="Johnson S."/>
            <person name="Tacon D."/>
            <person name="Jesse T."/>
            <person name="Heijnen L."/>
            <person name="Schwarz S."/>
            <person name="Scholler P."/>
            <person name="Heber S."/>
            <person name="Francs P."/>
            <person name="Bielke C."/>
            <person name="Frishman D."/>
            <person name="Haase D."/>
            <person name="Lemcke K."/>
            <person name="Mewes H.-W."/>
            <person name="Stocker S."/>
            <person name="Zaccaria P."/>
            <person name="Bevan M."/>
            <person name="Wilson R.K."/>
            <person name="de la Bastide M."/>
            <person name="Habermann K."/>
            <person name="Parnell L."/>
            <person name="Dedhia N."/>
            <person name="Gnoj L."/>
            <person name="Schutz K."/>
            <person name="Huang E."/>
            <person name="Spiegel L."/>
            <person name="Sekhon M."/>
            <person name="Murray J."/>
            <person name="Sheet P."/>
            <person name="Cordes M."/>
            <person name="Abu-Threideh J."/>
            <person name="Stoneking T."/>
            <person name="Kalicki J."/>
            <person name="Graves T."/>
            <person name="Harmon G."/>
            <person name="Edwards J."/>
            <person name="Latreille P."/>
            <person name="Courtney L."/>
            <person name="Cloud J."/>
            <person name="Abbott A."/>
            <person name="Scott K."/>
            <person name="Johnson D."/>
            <person name="Minx P."/>
            <person name="Bentley D."/>
            <person name="Fulton B."/>
            <person name="Miller N."/>
            <person name="Greco T."/>
            <person name="Kemp K."/>
            <person name="Kramer J."/>
            <person name="Fulton L."/>
            <person name="Mardis E."/>
            <person name="Dante M."/>
            <person name="Pepin K."/>
            <person name="Hillier L.W."/>
            <person name="Nelson J."/>
            <person name="Spieth J."/>
            <person name="Ryan E."/>
            <person name="Andrews S."/>
            <person name="Geisel C."/>
            <person name="Layman D."/>
            <person name="Du H."/>
            <person name="Ali J."/>
            <person name="Berghoff A."/>
            <person name="Jones K."/>
            <person name="Drone K."/>
            <person name="Cotton M."/>
            <person name="Joshu C."/>
            <person name="Antonoiu B."/>
            <person name="Zidanic M."/>
            <person name="Strong C."/>
            <person name="Sun H."/>
            <person name="Lamar B."/>
            <person name="Yordan C."/>
            <person name="Ma P."/>
            <person name="Zhong J."/>
            <person name="Preston R."/>
            <person name="Vil D."/>
            <person name="Shekher M."/>
            <person name="Matero A."/>
            <person name="Shah R."/>
            <person name="Swaby I.K."/>
            <person name="O'Shaughnessy A."/>
            <person name="Rodriguez M."/>
            <person name="Hoffman J."/>
            <person name="Till S."/>
            <person name="Granat S."/>
            <person name="Shohdy N."/>
            <person name="Hasegawa A."/>
            <person name="Hameed A."/>
            <person name="Lodhi M."/>
            <person name="Johnson A."/>
            <person name="Chen E."/>
            <person name="Marra M.A."/>
            <person name="Martienssen R."/>
            <person name="McCombie W.R."/>
        </authorList>
    </citation>
    <scope>NUCLEOTIDE SEQUENCE [LARGE SCALE GENOMIC DNA]</scope>
    <source>
        <strain>cv. Columbia</strain>
    </source>
</reference>
<reference key="2">
    <citation type="journal article" date="2017" name="Plant J.">
        <title>Araport11: a complete reannotation of the Arabidopsis thaliana reference genome.</title>
        <authorList>
            <person name="Cheng C.Y."/>
            <person name="Krishnakumar V."/>
            <person name="Chan A.P."/>
            <person name="Thibaud-Nissen F."/>
            <person name="Schobel S."/>
            <person name="Town C.D."/>
        </authorList>
    </citation>
    <scope>GENOME REANNOTATION</scope>
    <source>
        <strain>cv. Columbia</strain>
    </source>
</reference>
<reference key="3">
    <citation type="journal article" date="2002" name="Genome Biol.">
        <title>Evaluation and classification of RING-finger domains encoded by the Arabidopsis genome.</title>
        <authorList>
            <person name="Kosarev P."/>
            <person name="Mayer K.F.X."/>
            <person name="Hardtke C.S."/>
        </authorList>
    </citation>
    <scope>GENE FAMILY ORGANIZATION</scope>
</reference>
<reference key="4">
    <citation type="journal article" date="2006" name="J. Mol. Evol.">
        <title>The ATL gene family from Arabidopsis thaliana and Oryza sativa comprises a large number of putative ubiquitin ligases of the RING-H2 type.</title>
        <authorList>
            <person name="Serrano M."/>
            <person name="Parra S."/>
            <person name="Alcaraz L.D."/>
            <person name="Guzman P."/>
        </authorList>
    </citation>
    <scope>NOMENCLATURE</scope>
    <scope>GENE FAMILY ORGANIZATION</scope>
</reference>
<gene>
    <name type="primary">ATL35</name>
    <name type="ordered locus">At4g09110</name>
    <name type="ORF">F23J3.140</name>
    <name type="ORF">T8A17.5</name>
</gene>
<sequence>MTIFARDLIYRIETKVLLPLFLVHLLPYVTCQQESESVDRNRKTNFPTETVIAIIVLAIFISLSMVACFLHKTFYRAEVEAASQEVFHSRARRGLEKELVESFPIFLYSEVKGLKIGKGGVECAICLSEFVDKETLRWMPPCSHTFHANCIDVWLSSQSTCPACRANLSLKPGESYPYPITDLETGNEQRDEHSLLQLGTNLDRFTLQLPEEMQRQLVSLNLIRTSNMTLPRAMSSRQGYRSGFSHGRQTLRRAISMSLSFSLQAASVRSTVGRDDLVLETSQAKDKDLCEQSFQHLMPEKV</sequence>
<dbReference type="EC" id="2.3.2.27" evidence="5"/>
<dbReference type="EMBL" id="AC005359">
    <property type="status" value="NOT_ANNOTATED_CDS"/>
    <property type="molecule type" value="Genomic_DNA"/>
</dbReference>
<dbReference type="EMBL" id="AL161514">
    <property type="protein sequence ID" value="CAB78035.1"/>
    <property type="molecule type" value="Genomic_DNA"/>
</dbReference>
<dbReference type="EMBL" id="CP002687">
    <property type="protein sequence ID" value="AEE82723.1"/>
    <property type="molecule type" value="Genomic_DNA"/>
</dbReference>
<dbReference type="PIR" id="C85092">
    <property type="entry name" value="C85092"/>
</dbReference>
<dbReference type="RefSeq" id="NP_192650.1">
    <property type="nucleotide sequence ID" value="NM_116980.3"/>
</dbReference>
<dbReference type="SMR" id="Q9M0R6"/>
<dbReference type="STRING" id="3702.Q9M0R6"/>
<dbReference type="PaxDb" id="3702-AT4G09110.1"/>
<dbReference type="EnsemblPlants" id="AT4G09110.1">
    <property type="protein sequence ID" value="AT4G09110.1"/>
    <property type="gene ID" value="AT4G09110"/>
</dbReference>
<dbReference type="GeneID" id="826489"/>
<dbReference type="Gramene" id="AT4G09110.1">
    <property type="protein sequence ID" value="AT4G09110.1"/>
    <property type="gene ID" value="AT4G09110"/>
</dbReference>
<dbReference type="KEGG" id="ath:AT4G09110"/>
<dbReference type="Araport" id="AT4G09110"/>
<dbReference type="TAIR" id="AT4G09110">
    <property type="gene designation" value="ATL35"/>
</dbReference>
<dbReference type="eggNOG" id="KOG0800">
    <property type="taxonomic scope" value="Eukaryota"/>
</dbReference>
<dbReference type="HOGENOM" id="CLU_035191_1_0_1"/>
<dbReference type="InParanoid" id="Q9M0R6"/>
<dbReference type="OMA" id="APDESIC"/>
<dbReference type="PhylomeDB" id="Q9M0R6"/>
<dbReference type="UniPathway" id="UPA00143"/>
<dbReference type="PRO" id="PR:Q9M0R6"/>
<dbReference type="Proteomes" id="UP000006548">
    <property type="component" value="Chromosome 4"/>
</dbReference>
<dbReference type="ExpressionAtlas" id="Q9M0R6">
    <property type="expression patterns" value="baseline and differential"/>
</dbReference>
<dbReference type="GO" id="GO:0016020">
    <property type="term" value="C:membrane"/>
    <property type="evidence" value="ECO:0007669"/>
    <property type="project" value="UniProtKB-SubCell"/>
</dbReference>
<dbReference type="GO" id="GO:0016740">
    <property type="term" value="F:transferase activity"/>
    <property type="evidence" value="ECO:0007669"/>
    <property type="project" value="UniProtKB-KW"/>
</dbReference>
<dbReference type="GO" id="GO:0008270">
    <property type="term" value="F:zinc ion binding"/>
    <property type="evidence" value="ECO:0007669"/>
    <property type="project" value="UniProtKB-KW"/>
</dbReference>
<dbReference type="GO" id="GO:0016567">
    <property type="term" value="P:protein ubiquitination"/>
    <property type="evidence" value="ECO:0007669"/>
    <property type="project" value="UniProtKB-UniPathway"/>
</dbReference>
<dbReference type="CDD" id="cd16461">
    <property type="entry name" value="RING-H2_EL5-like"/>
    <property type="match status" value="1"/>
</dbReference>
<dbReference type="FunFam" id="3.30.40.10:FF:000187">
    <property type="entry name" value="E3 ubiquitin-protein ligase ATL6"/>
    <property type="match status" value="1"/>
</dbReference>
<dbReference type="Gene3D" id="3.30.40.10">
    <property type="entry name" value="Zinc/RING finger domain, C3HC4 (zinc finger)"/>
    <property type="match status" value="1"/>
</dbReference>
<dbReference type="InterPro" id="IPR053238">
    <property type="entry name" value="RING-H2_zinc_finger"/>
</dbReference>
<dbReference type="InterPro" id="IPR001841">
    <property type="entry name" value="Znf_RING"/>
</dbReference>
<dbReference type="InterPro" id="IPR013083">
    <property type="entry name" value="Znf_RING/FYVE/PHD"/>
</dbReference>
<dbReference type="PANTHER" id="PTHR14155">
    <property type="entry name" value="RING FINGER DOMAIN-CONTAINING"/>
    <property type="match status" value="1"/>
</dbReference>
<dbReference type="PANTHER" id="PTHR14155:SF547">
    <property type="entry name" value="RING-H2 FINGER PROTEIN ATL35-RELATED"/>
    <property type="match status" value="1"/>
</dbReference>
<dbReference type="Pfam" id="PF13639">
    <property type="entry name" value="zf-RING_2"/>
    <property type="match status" value="1"/>
</dbReference>
<dbReference type="SMART" id="SM00184">
    <property type="entry name" value="RING"/>
    <property type="match status" value="1"/>
</dbReference>
<dbReference type="SUPFAM" id="SSF57850">
    <property type="entry name" value="RING/U-box"/>
    <property type="match status" value="1"/>
</dbReference>
<dbReference type="PROSITE" id="PS50089">
    <property type="entry name" value="ZF_RING_2"/>
    <property type="match status" value="1"/>
</dbReference>
<evidence type="ECO:0000250" key="1"/>
<evidence type="ECO:0000250" key="2">
    <source>
        <dbReference type="UniProtKB" id="Q8RXX9"/>
    </source>
</evidence>
<evidence type="ECO:0000255" key="3"/>
<evidence type="ECO:0000255" key="4">
    <source>
        <dbReference type="PROSITE-ProRule" id="PRU00175"/>
    </source>
</evidence>
<evidence type="ECO:0000305" key="5"/>
<organism>
    <name type="scientific">Arabidopsis thaliana</name>
    <name type="common">Mouse-ear cress</name>
    <dbReference type="NCBI Taxonomy" id="3702"/>
    <lineage>
        <taxon>Eukaryota</taxon>
        <taxon>Viridiplantae</taxon>
        <taxon>Streptophyta</taxon>
        <taxon>Embryophyta</taxon>
        <taxon>Tracheophyta</taxon>
        <taxon>Spermatophyta</taxon>
        <taxon>Magnoliopsida</taxon>
        <taxon>eudicotyledons</taxon>
        <taxon>Gunneridae</taxon>
        <taxon>Pentapetalae</taxon>
        <taxon>rosids</taxon>
        <taxon>malvids</taxon>
        <taxon>Brassicales</taxon>
        <taxon>Brassicaceae</taxon>
        <taxon>Camelineae</taxon>
        <taxon>Arabidopsis</taxon>
    </lineage>
</organism>
<accession>Q9M0R6</accession>
<comment type="catalytic activity">
    <reaction evidence="5">
        <text>S-ubiquitinyl-[E2 ubiquitin-conjugating enzyme]-L-cysteine + [acceptor protein]-L-lysine = [E2 ubiquitin-conjugating enzyme]-L-cysteine + N(6)-ubiquitinyl-[acceptor protein]-L-lysine.</text>
        <dbReference type="EC" id="2.3.2.27"/>
    </reaction>
</comment>
<comment type="pathway">
    <text>Protein modification; protein ubiquitination.</text>
</comment>
<comment type="subcellular location">
    <subcellularLocation>
        <location evidence="5">Membrane</location>
        <topology evidence="5">Single-pass membrane protein</topology>
    </subcellularLocation>
</comment>
<comment type="domain">
    <text evidence="1">The RING-type zinc finger domain mediates binding to an E2 ubiquitin-conjugating enzyme.</text>
</comment>
<comment type="similarity">
    <text evidence="5">Belongs to the RING-type zinc finger family. ATL subfamily.</text>
</comment>
<feature type="signal peptide" evidence="3">
    <location>
        <begin position="1"/>
        <end position="31"/>
    </location>
</feature>
<feature type="chain" id="PRO_0000030708" description="Putative RING-H2 finger protein ATL35">
    <location>
        <begin position="32"/>
        <end position="302"/>
    </location>
</feature>
<feature type="transmembrane region" description="Helical" evidence="3">
    <location>
        <begin position="50"/>
        <end position="70"/>
    </location>
</feature>
<feature type="zinc finger region" description="RING-type; atypical" evidence="4">
    <location>
        <begin position="123"/>
        <end position="165"/>
    </location>
</feature>
<feature type="modified residue" description="Phosphoserine" evidence="2">
    <location>
        <position position="226"/>
    </location>
</feature>